<organism>
    <name type="scientific">Streptomyces avermitilis (strain ATCC 31267 / DSM 46492 / JCM 5070 / NBRC 14893 / NCIMB 12804 / NRRL 8165 / MA-4680)</name>
    <dbReference type="NCBI Taxonomy" id="227882"/>
    <lineage>
        <taxon>Bacteria</taxon>
        <taxon>Bacillati</taxon>
        <taxon>Actinomycetota</taxon>
        <taxon>Actinomycetes</taxon>
        <taxon>Kitasatosporales</taxon>
        <taxon>Streptomycetaceae</taxon>
        <taxon>Streptomyces</taxon>
    </lineage>
</organism>
<accession>Q82EH1</accession>
<gene>
    <name evidence="1" type="primary">rpmE2-2</name>
    <name type="ordered locus">SAV_4644</name>
</gene>
<sequence length="82" mass="9300">MREGIHPAYAPVVFRDRAANHAFLTRSTMTSEKTVEWTDGHTYPVVDVEISNVSHPFYTGTARVLDTAGRVERFERRYGKGS</sequence>
<evidence type="ECO:0000255" key="1">
    <source>
        <dbReference type="HAMAP-Rule" id="MF_00502"/>
    </source>
</evidence>
<evidence type="ECO:0000305" key="2"/>
<comment type="subunit">
    <text evidence="1">Part of the 50S ribosomal subunit.</text>
</comment>
<comment type="similarity">
    <text evidence="1">Belongs to the bacterial ribosomal protein bL31 family. Type B subfamily.</text>
</comment>
<proteinExistence type="inferred from homology"/>
<reference key="1">
    <citation type="journal article" date="2001" name="Proc. Natl. Acad. Sci. U.S.A.">
        <title>Genome sequence of an industrial microorganism Streptomyces avermitilis: deducing the ability of producing secondary metabolites.</title>
        <authorList>
            <person name="Omura S."/>
            <person name="Ikeda H."/>
            <person name="Ishikawa J."/>
            <person name="Hanamoto A."/>
            <person name="Takahashi C."/>
            <person name="Shinose M."/>
            <person name="Takahashi Y."/>
            <person name="Horikawa H."/>
            <person name="Nakazawa H."/>
            <person name="Osonoe T."/>
            <person name="Kikuchi H."/>
            <person name="Shiba T."/>
            <person name="Sakaki Y."/>
            <person name="Hattori M."/>
        </authorList>
    </citation>
    <scope>NUCLEOTIDE SEQUENCE [LARGE SCALE GENOMIC DNA]</scope>
    <source>
        <strain>ATCC 31267 / DSM 46492 / JCM 5070 / NBRC 14893 / NCIMB 12804 / NRRL 8165 / MA-4680</strain>
    </source>
</reference>
<reference key="2">
    <citation type="journal article" date="2003" name="Nat. Biotechnol.">
        <title>Complete genome sequence and comparative analysis of the industrial microorganism Streptomyces avermitilis.</title>
        <authorList>
            <person name="Ikeda H."/>
            <person name="Ishikawa J."/>
            <person name="Hanamoto A."/>
            <person name="Shinose M."/>
            <person name="Kikuchi H."/>
            <person name="Shiba T."/>
            <person name="Sakaki Y."/>
            <person name="Hattori M."/>
            <person name="Omura S."/>
        </authorList>
    </citation>
    <scope>NUCLEOTIDE SEQUENCE [LARGE SCALE GENOMIC DNA]</scope>
    <source>
        <strain>ATCC 31267 / DSM 46492 / JCM 5070 / NBRC 14893 / NCIMB 12804 / NRRL 8165 / MA-4680</strain>
    </source>
</reference>
<keyword id="KW-1185">Reference proteome</keyword>
<keyword id="KW-0687">Ribonucleoprotein</keyword>
<keyword id="KW-0689">Ribosomal protein</keyword>
<feature type="chain" id="PRO_0000173266" description="Large ribosomal subunit protein bL31B-2">
    <location>
        <begin position="1"/>
        <end position="82"/>
    </location>
</feature>
<dbReference type="EMBL" id="BA000030">
    <property type="protein sequence ID" value="BAC72356.1"/>
    <property type="molecule type" value="Genomic_DNA"/>
</dbReference>
<dbReference type="RefSeq" id="WP_010986068.1">
    <property type="nucleotide sequence ID" value="NZ_JZJK01000062.1"/>
</dbReference>
<dbReference type="SMR" id="Q82EH1"/>
<dbReference type="GeneID" id="41541725"/>
<dbReference type="KEGG" id="sma:SAVERM_4644"/>
<dbReference type="eggNOG" id="COG0254">
    <property type="taxonomic scope" value="Bacteria"/>
</dbReference>
<dbReference type="HOGENOM" id="CLU_114306_2_2_11"/>
<dbReference type="OrthoDB" id="9803251at2"/>
<dbReference type="Proteomes" id="UP000000428">
    <property type="component" value="Chromosome"/>
</dbReference>
<dbReference type="GO" id="GO:1990904">
    <property type="term" value="C:ribonucleoprotein complex"/>
    <property type="evidence" value="ECO:0007669"/>
    <property type="project" value="UniProtKB-KW"/>
</dbReference>
<dbReference type="GO" id="GO:0005840">
    <property type="term" value="C:ribosome"/>
    <property type="evidence" value="ECO:0007669"/>
    <property type="project" value="UniProtKB-KW"/>
</dbReference>
<dbReference type="GO" id="GO:0003735">
    <property type="term" value="F:structural constituent of ribosome"/>
    <property type="evidence" value="ECO:0007669"/>
    <property type="project" value="InterPro"/>
</dbReference>
<dbReference type="GO" id="GO:0006412">
    <property type="term" value="P:translation"/>
    <property type="evidence" value="ECO:0007669"/>
    <property type="project" value="UniProtKB-UniRule"/>
</dbReference>
<dbReference type="Gene3D" id="4.10.830.30">
    <property type="entry name" value="Ribosomal protein L31"/>
    <property type="match status" value="1"/>
</dbReference>
<dbReference type="HAMAP" id="MF_00502">
    <property type="entry name" value="Ribosomal_bL31_2"/>
    <property type="match status" value="1"/>
</dbReference>
<dbReference type="InterPro" id="IPR034704">
    <property type="entry name" value="Ribosomal_bL28/bL31-like_sf"/>
</dbReference>
<dbReference type="InterPro" id="IPR002150">
    <property type="entry name" value="Ribosomal_bL31"/>
</dbReference>
<dbReference type="InterPro" id="IPR027493">
    <property type="entry name" value="Ribosomal_bL31_B"/>
</dbReference>
<dbReference type="InterPro" id="IPR042105">
    <property type="entry name" value="Ribosomal_bL31_sf"/>
</dbReference>
<dbReference type="NCBIfam" id="TIGR00105">
    <property type="entry name" value="L31"/>
    <property type="match status" value="1"/>
</dbReference>
<dbReference type="NCBIfam" id="NF002462">
    <property type="entry name" value="PRK01678.1"/>
    <property type="match status" value="1"/>
</dbReference>
<dbReference type="PANTHER" id="PTHR33280">
    <property type="entry name" value="50S RIBOSOMAL PROTEIN L31, CHLOROPLASTIC"/>
    <property type="match status" value="1"/>
</dbReference>
<dbReference type="PANTHER" id="PTHR33280:SF1">
    <property type="entry name" value="LARGE RIBOSOMAL SUBUNIT PROTEIN BL31C"/>
    <property type="match status" value="1"/>
</dbReference>
<dbReference type="Pfam" id="PF01197">
    <property type="entry name" value="Ribosomal_L31"/>
    <property type="match status" value="1"/>
</dbReference>
<dbReference type="PRINTS" id="PR01249">
    <property type="entry name" value="RIBOSOMALL31"/>
</dbReference>
<dbReference type="SUPFAM" id="SSF143800">
    <property type="entry name" value="L28p-like"/>
    <property type="match status" value="1"/>
</dbReference>
<dbReference type="PROSITE" id="PS01143">
    <property type="entry name" value="RIBOSOMAL_L31"/>
    <property type="match status" value="1"/>
</dbReference>
<name>R31B2_STRAW</name>
<protein>
    <recommendedName>
        <fullName evidence="1">Large ribosomal subunit protein bL31B-2</fullName>
    </recommendedName>
    <alternativeName>
        <fullName evidence="2">50S ribosomal protein L31 type B 2</fullName>
    </alternativeName>
</protein>